<comment type="function">
    <text evidence="1">Specifically methylates the guanine in position 1835 (m2G1835) of 23S rRNA.</text>
</comment>
<comment type="catalytic activity">
    <reaction evidence="1">
        <text>guanosine(1835) in 23S rRNA + S-adenosyl-L-methionine = N(2)-methylguanosine(1835) in 23S rRNA + S-adenosyl-L-homocysteine + H(+)</text>
        <dbReference type="Rhea" id="RHEA:42744"/>
        <dbReference type="Rhea" id="RHEA-COMP:10217"/>
        <dbReference type="Rhea" id="RHEA-COMP:10218"/>
        <dbReference type="ChEBI" id="CHEBI:15378"/>
        <dbReference type="ChEBI" id="CHEBI:57856"/>
        <dbReference type="ChEBI" id="CHEBI:59789"/>
        <dbReference type="ChEBI" id="CHEBI:74269"/>
        <dbReference type="ChEBI" id="CHEBI:74481"/>
        <dbReference type="EC" id="2.1.1.174"/>
    </reaction>
</comment>
<comment type="subcellular location">
    <subcellularLocation>
        <location evidence="1">Cytoplasm</location>
    </subcellularLocation>
</comment>
<comment type="similarity">
    <text evidence="1">Belongs to the methyltransferase superfamily. RlmG family.</text>
</comment>
<comment type="sequence caution" evidence="2">
    <conflict type="erroneous initiation">
        <sequence resource="EMBL-CDS" id="AAF95441"/>
    </conflict>
</comment>
<proteinExistence type="inferred from homology"/>
<name>RLMG_VIBCH</name>
<dbReference type="EC" id="2.1.1.174" evidence="1"/>
<dbReference type="EMBL" id="AE003852">
    <property type="protein sequence ID" value="AAF95441.1"/>
    <property type="status" value="ALT_INIT"/>
    <property type="molecule type" value="Genomic_DNA"/>
</dbReference>
<dbReference type="PIR" id="A82095">
    <property type="entry name" value="A82095"/>
</dbReference>
<dbReference type="RefSeq" id="NP_231928.2">
    <property type="nucleotide sequence ID" value="NC_002505.1"/>
</dbReference>
<dbReference type="RefSeq" id="WP_000845886.1">
    <property type="nucleotide sequence ID" value="NZ_LT906614.1"/>
</dbReference>
<dbReference type="SMR" id="Q9KPR9"/>
<dbReference type="STRING" id="243277.VC_2297"/>
<dbReference type="DNASU" id="2613093"/>
<dbReference type="EnsemblBacteria" id="AAF95441">
    <property type="protein sequence ID" value="AAF95441"/>
    <property type="gene ID" value="VC_2297"/>
</dbReference>
<dbReference type="KEGG" id="vch:VC_2297"/>
<dbReference type="PATRIC" id="fig|243277.26.peg.2191"/>
<dbReference type="eggNOG" id="COG2813">
    <property type="taxonomic scope" value="Bacteria"/>
</dbReference>
<dbReference type="HOGENOM" id="CLU_040288_4_0_6"/>
<dbReference type="Proteomes" id="UP000000584">
    <property type="component" value="Chromosome 1"/>
</dbReference>
<dbReference type="GO" id="GO:0005737">
    <property type="term" value="C:cytoplasm"/>
    <property type="evidence" value="ECO:0007669"/>
    <property type="project" value="UniProtKB-SubCell"/>
</dbReference>
<dbReference type="GO" id="GO:0052916">
    <property type="term" value="F:23S rRNA (guanine(1835)-N(2))-methyltransferase activity"/>
    <property type="evidence" value="ECO:0007669"/>
    <property type="project" value="UniProtKB-EC"/>
</dbReference>
<dbReference type="GO" id="GO:0003676">
    <property type="term" value="F:nucleic acid binding"/>
    <property type="evidence" value="ECO:0007669"/>
    <property type="project" value="InterPro"/>
</dbReference>
<dbReference type="GO" id="GO:0008990">
    <property type="term" value="F:rRNA (guanine-N2-)-methyltransferase activity"/>
    <property type="evidence" value="ECO:0000318"/>
    <property type="project" value="GO_Central"/>
</dbReference>
<dbReference type="GO" id="GO:0070475">
    <property type="term" value="P:rRNA base methylation"/>
    <property type="evidence" value="ECO:0000318"/>
    <property type="project" value="GO_Central"/>
</dbReference>
<dbReference type="CDD" id="cd02440">
    <property type="entry name" value="AdoMet_MTases"/>
    <property type="match status" value="1"/>
</dbReference>
<dbReference type="Gene3D" id="3.40.50.150">
    <property type="entry name" value="Vaccinia Virus protein VP39"/>
    <property type="match status" value="2"/>
</dbReference>
<dbReference type="HAMAP" id="MF_01859">
    <property type="entry name" value="23SrRNA_methyltr_G"/>
    <property type="match status" value="1"/>
</dbReference>
<dbReference type="InterPro" id="IPR002052">
    <property type="entry name" value="DNA_methylase_N6_adenine_CS"/>
</dbReference>
<dbReference type="InterPro" id="IPR017237">
    <property type="entry name" value="rRNA_m2G-MeTrfase_RlmG"/>
</dbReference>
<dbReference type="InterPro" id="IPR046977">
    <property type="entry name" value="RsmC/RlmG"/>
</dbReference>
<dbReference type="InterPro" id="IPR029063">
    <property type="entry name" value="SAM-dependent_MTases_sf"/>
</dbReference>
<dbReference type="InterPro" id="IPR007848">
    <property type="entry name" value="Small_mtfrase_dom"/>
</dbReference>
<dbReference type="PANTHER" id="PTHR47816:SF5">
    <property type="entry name" value="RIBOSOMAL RNA LARGE SUBUNIT METHYLTRANSFERASE G"/>
    <property type="match status" value="1"/>
</dbReference>
<dbReference type="PANTHER" id="PTHR47816">
    <property type="entry name" value="RIBOSOMAL RNA SMALL SUBUNIT METHYLTRANSFERASE C"/>
    <property type="match status" value="1"/>
</dbReference>
<dbReference type="Pfam" id="PF05175">
    <property type="entry name" value="MTS"/>
    <property type="match status" value="1"/>
</dbReference>
<dbReference type="PIRSF" id="PIRSF037565">
    <property type="entry name" value="RRNA_m2G_Mtase_RsmD_prd"/>
    <property type="match status" value="1"/>
</dbReference>
<dbReference type="SUPFAM" id="SSF53335">
    <property type="entry name" value="S-adenosyl-L-methionine-dependent methyltransferases"/>
    <property type="match status" value="1"/>
</dbReference>
<feature type="chain" id="PRO_0000366530" description="Ribosomal RNA large subunit methyltransferase G">
    <location>
        <begin position="1"/>
        <end position="376"/>
    </location>
</feature>
<accession>Q9KPR9</accession>
<sequence>MKTELTLLEQTLTLHRFPKRNNETLQAWDAGDEYLIQHVEQLALPESSHIVIINDHFGTLSCWFSQKHKVSMMSDSYIAHQATQANLQQNQRPPVQLLTTLDPVPNDASVVLLQLPKSNRHLVWILSQLRKALSPNIPIIAVNKAKEIHTSTLNLFEKHLGPTTTSLAWKKHRLVFSSATVNPANEVNPECGWSIEPYAITLTNLPNVYSGESLDLGSRFILEHLPADPTLEDFIDLGCGNGVLSVRLGQLNPQAKITCVDESFMAIASAQKNLHDNLGKRDIHCIANNCLDGFPAHSSSMIVCNPPFHQQQTITDHIAWQMFCDSKHVLKKGGKLWVIGNRHLGYDVKLARLFGKSHVRVIANNSKFVILQAIKS</sequence>
<keyword id="KW-0963">Cytoplasm</keyword>
<keyword id="KW-0489">Methyltransferase</keyword>
<keyword id="KW-1185">Reference proteome</keyword>
<keyword id="KW-0698">rRNA processing</keyword>
<keyword id="KW-0949">S-adenosyl-L-methionine</keyword>
<keyword id="KW-0808">Transferase</keyword>
<evidence type="ECO:0000255" key="1">
    <source>
        <dbReference type="HAMAP-Rule" id="MF_01859"/>
    </source>
</evidence>
<evidence type="ECO:0000305" key="2"/>
<organism>
    <name type="scientific">Vibrio cholerae serotype O1 (strain ATCC 39315 / El Tor Inaba N16961)</name>
    <dbReference type="NCBI Taxonomy" id="243277"/>
    <lineage>
        <taxon>Bacteria</taxon>
        <taxon>Pseudomonadati</taxon>
        <taxon>Pseudomonadota</taxon>
        <taxon>Gammaproteobacteria</taxon>
        <taxon>Vibrionales</taxon>
        <taxon>Vibrionaceae</taxon>
        <taxon>Vibrio</taxon>
    </lineage>
</organism>
<gene>
    <name evidence="1" type="primary">rlmG</name>
    <name type="ordered locus">VC_2297</name>
</gene>
<protein>
    <recommendedName>
        <fullName evidence="1">Ribosomal RNA large subunit methyltransferase G</fullName>
        <ecNumber evidence="1">2.1.1.174</ecNumber>
    </recommendedName>
    <alternativeName>
        <fullName evidence="1">23S rRNA m2G1835 methyltransferase</fullName>
    </alternativeName>
    <alternativeName>
        <fullName evidence="1">rRNA (guanine-N(2)-)-methyltransferase RlmG</fullName>
    </alternativeName>
</protein>
<reference key="1">
    <citation type="journal article" date="2000" name="Nature">
        <title>DNA sequence of both chromosomes of the cholera pathogen Vibrio cholerae.</title>
        <authorList>
            <person name="Heidelberg J.F."/>
            <person name="Eisen J.A."/>
            <person name="Nelson W.C."/>
            <person name="Clayton R.A."/>
            <person name="Gwinn M.L."/>
            <person name="Dodson R.J."/>
            <person name="Haft D.H."/>
            <person name="Hickey E.K."/>
            <person name="Peterson J.D."/>
            <person name="Umayam L.A."/>
            <person name="Gill S.R."/>
            <person name="Nelson K.E."/>
            <person name="Read T.D."/>
            <person name="Tettelin H."/>
            <person name="Richardson D.L."/>
            <person name="Ermolaeva M.D."/>
            <person name="Vamathevan J.J."/>
            <person name="Bass S."/>
            <person name="Qin H."/>
            <person name="Dragoi I."/>
            <person name="Sellers P."/>
            <person name="McDonald L.A."/>
            <person name="Utterback T.R."/>
            <person name="Fleischmann R.D."/>
            <person name="Nierman W.C."/>
            <person name="White O."/>
            <person name="Salzberg S.L."/>
            <person name="Smith H.O."/>
            <person name="Colwell R.R."/>
            <person name="Mekalanos J.J."/>
            <person name="Venter J.C."/>
            <person name="Fraser C.M."/>
        </authorList>
    </citation>
    <scope>NUCLEOTIDE SEQUENCE [LARGE SCALE GENOMIC DNA]</scope>
    <source>
        <strain>ATCC 39315 / El Tor Inaba N16961</strain>
    </source>
</reference>